<evidence type="ECO:0000250" key="1">
    <source>
        <dbReference type="UniProtKB" id="Q96Q45"/>
    </source>
</evidence>
<evidence type="ECO:0000255" key="2"/>
<evidence type="ECO:0000256" key="3">
    <source>
        <dbReference type="SAM" id="MobiDB-lite"/>
    </source>
</evidence>
<evidence type="ECO:0000269" key="4">
    <source>
    </source>
</evidence>
<evidence type="ECO:0000303" key="5">
    <source>
    </source>
</evidence>
<evidence type="ECO:0000303" key="6">
    <source>
    </source>
</evidence>
<evidence type="ECO:0000305" key="7"/>
<comment type="function">
    <text evidence="4">Component of the transition zone in primary cilia. Required for ciliogenesis.</text>
</comment>
<comment type="subunit">
    <text evidence="1">Part of the tectonic-like complex (also named B9 complex). Interacts with TMEM107.</text>
</comment>
<comment type="subcellular location">
    <subcellularLocation>
        <location evidence="7">Membrane</location>
        <topology evidence="7">Multi-pass membrane protein</topology>
    </subcellularLocation>
    <subcellularLocation>
        <location evidence="4">Cell projection</location>
        <location evidence="4">Cilium</location>
    </subcellularLocation>
    <text>Localizes at the proximal region of primary cilia were observed, consistent with localization to the transition zone.</text>
</comment>
<comment type="alternative products">
    <event type="alternative splicing"/>
    <isoform>
        <id>Q3V0J1-1</id>
        <name>1</name>
        <sequence type="displayed"/>
    </isoform>
    <isoform>
        <id>Q3V0J1-2</id>
        <name>2</name>
        <sequence type="described" ref="VSP_042384 VSP_042386"/>
    </isoform>
    <isoform>
        <id>Q3V0J1-3</id>
        <name>3</name>
        <sequence type="described" ref="VSP_042385 VSP_042386"/>
    </isoform>
</comment>
<comment type="similarity">
    <text evidence="7">Belongs to the TMEM237 family.</text>
</comment>
<protein>
    <recommendedName>
        <fullName>Transmembrane protein 237</fullName>
    </recommendedName>
    <alternativeName>
        <fullName>Amyotrophic lateral sclerosis 2 chromosomal region candidate gene 4 protein homolog</fullName>
    </alternativeName>
</protein>
<gene>
    <name type="primary">Tmem237</name>
    <name type="synonym">Als2cr4</name>
</gene>
<organism>
    <name type="scientific">Mus musculus</name>
    <name type="common">Mouse</name>
    <dbReference type="NCBI Taxonomy" id="10090"/>
    <lineage>
        <taxon>Eukaryota</taxon>
        <taxon>Metazoa</taxon>
        <taxon>Chordata</taxon>
        <taxon>Craniata</taxon>
        <taxon>Vertebrata</taxon>
        <taxon>Euteleostomi</taxon>
        <taxon>Mammalia</taxon>
        <taxon>Eutheria</taxon>
        <taxon>Euarchontoglires</taxon>
        <taxon>Glires</taxon>
        <taxon>Rodentia</taxon>
        <taxon>Myomorpha</taxon>
        <taxon>Muroidea</taxon>
        <taxon>Muridae</taxon>
        <taxon>Murinae</taxon>
        <taxon>Mus</taxon>
        <taxon>Mus</taxon>
    </lineage>
</organism>
<accession>Q3V0J1</accession>
<accession>B2RVK7</accession>
<accession>Q3TIS2</accession>
<proteinExistence type="evidence at protein level"/>
<keyword id="KW-0025">Alternative splicing</keyword>
<keyword id="KW-0966">Cell projection</keyword>
<keyword id="KW-0969">Cilium</keyword>
<keyword id="KW-0970">Cilium biogenesis/degradation</keyword>
<keyword id="KW-0472">Membrane</keyword>
<keyword id="KW-0597">Phosphoprotein</keyword>
<keyword id="KW-1185">Reference proteome</keyword>
<keyword id="KW-0812">Transmembrane</keyword>
<keyword id="KW-1133">Transmembrane helix</keyword>
<name>TM237_MOUSE</name>
<dbReference type="EMBL" id="AK133112">
    <property type="protein sequence ID" value="BAE21513.1"/>
    <property type="molecule type" value="mRNA"/>
</dbReference>
<dbReference type="EMBL" id="AK167733">
    <property type="protein sequence ID" value="BAE39774.1"/>
    <property type="molecule type" value="mRNA"/>
</dbReference>
<dbReference type="EMBL" id="AC133162">
    <property type="status" value="NOT_ANNOTATED_CDS"/>
    <property type="molecule type" value="Genomic_DNA"/>
</dbReference>
<dbReference type="EMBL" id="BC147243">
    <property type="protein sequence ID" value="AAI47244.1"/>
    <property type="molecule type" value="mRNA"/>
</dbReference>
<dbReference type="EMBL" id="BC147244">
    <property type="protein sequence ID" value="AAI47245.1"/>
    <property type="molecule type" value="mRNA"/>
</dbReference>
<dbReference type="CCDS" id="CCDS14983.1">
    <molecule id="Q3V0J1-2"/>
</dbReference>
<dbReference type="CCDS" id="CCDS14984.1">
    <molecule id="Q3V0J1-3"/>
</dbReference>
<dbReference type="CCDS" id="CCDS87834.1">
    <molecule id="Q3V0J1-1"/>
</dbReference>
<dbReference type="RefSeq" id="NP_001028621.1">
    <molecule id="Q3V0J1-2"/>
    <property type="nucleotide sequence ID" value="NM_001033449.2"/>
</dbReference>
<dbReference type="RefSeq" id="NP_001032901.1">
    <molecule id="Q3V0J1-3"/>
    <property type="nucleotide sequence ID" value="NM_001037812.3"/>
</dbReference>
<dbReference type="RefSeq" id="NP_001348342.1">
    <molecule id="Q3V0J1-1"/>
    <property type="nucleotide sequence ID" value="NM_001361413.1"/>
</dbReference>
<dbReference type="BioGRID" id="237843">
    <property type="interactions" value="1"/>
</dbReference>
<dbReference type="FunCoup" id="Q3V0J1">
    <property type="interactions" value="526"/>
</dbReference>
<dbReference type="IntAct" id="Q3V0J1">
    <property type="interactions" value="2"/>
</dbReference>
<dbReference type="MINT" id="Q3V0J1"/>
<dbReference type="STRING" id="10090.ENSMUSP00000092522"/>
<dbReference type="iPTMnet" id="Q3V0J1"/>
<dbReference type="PhosphoSitePlus" id="Q3V0J1"/>
<dbReference type="PaxDb" id="10090-ENSMUSP00000092522"/>
<dbReference type="PeptideAtlas" id="Q3V0J1"/>
<dbReference type="ProteomicsDB" id="260690">
    <molecule id="Q3V0J1-1"/>
</dbReference>
<dbReference type="ProteomicsDB" id="260691">
    <molecule id="Q3V0J1-2"/>
</dbReference>
<dbReference type="ProteomicsDB" id="260692">
    <molecule id="Q3V0J1-3"/>
</dbReference>
<dbReference type="Pumba" id="Q3V0J1"/>
<dbReference type="Antibodypedia" id="47646">
    <property type="antibodies" value="100 antibodies from 22 providers"/>
</dbReference>
<dbReference type="Ensembl" id="ENSMUST00000087475.11">
    <molecule id="Q3V0J1-3"/>
    <property type="protein sequence ID" value="ENSMUSP00000084745.5"/>
    <property type="gene ID" value="ENSMUSG00000038079.15"/>
</dbReference>
<dbReference type="Ensembl" id="ENSMUST00000094917.10">
    <molecule id="Q3V0J1-2"/>
    <property type="protein sequence ID" value="ENSMUSP00000092522.4"/>
    <property type="gene ID" value="ENSMUSG00000038079.15"/>
</dbReference>
<dbReference type="Ensembl" id="ENSMUST00000186794.7">
    <molecule id="Q3V0J1-1"/>
    <property type="protein sequence ID" value="ENSMUSP00000139823.2"/>
    <property type="gene ID" value="ENSMUSG00000038079.15"/>
</dbReference>
<dbReference type="GeneID" id="381259"/>
<dbReference type="KEGG" id="mmu:381259"/>
<dbReference type="UCSC" id="uc007bdd.1">
    <molecule id="Q3V0J1-3"/>
    <property type="organism name" value="mouse"/>
</dbReference>
<dbReference type="UCSC" id="uc007bde.1">
    <molecule id="Q3V0J1-2"/>
    <property type="organism name" value="mouse"/>
</dbReference>
<dbReference type="UCSC" id="uc007bdf.1">
    <molecule id="Q3V0J1-1"/>
    <property type="organism name" value="mouse"/>
</dbReference>
<dbReference type="AGR" id="MGI:2138365"/>
<dbReference type="CTD" id="65062"/>
<dbReference type="MGI" id="MGI:2138365">
    <property type="gene designation" value="Tmem237"/>
</dbReference>
<dbReference type="VEuPathDB" id="HostDB:ENSMUSG00000038079"/>
<dbReference type="eggNOG" id="ENOG502QTW0">
    <property type="taxonomic scope" value="Eukaryota"/>
</dbReference>
<dbReference type="GeneTree" id="ENSGT00390000005159"/>
<dbReference type="HOGENOM" id="CLU_061097_0_0_1"/>
<dbReference type="InParanoid" id="Q3V0J1"/>
<dbReference type="OMA" id="WICVATR"/>
<dbReference type="OrthoDB" id="550113at2759"/>
<dbReference type="PhylomeDB" id="Q3V0J1"/>
<dbReference type="TreeFam" id="TF329703"/>
<dbReference type="BioGRID-ORCS" id="381259">
    <property type="hits" value="0 hits in 77 CRISPR screens"/>
</dbReference>
<dbReference type="ChiTaRS" id="Tmem237">
    <property type="organism name" value="mouse"/>
</dbReference>
<dbReference type="PRO" id="PR:Q3V0J1"/>
<dbReference type="Proteomes" id="UP000000589">
    <property type="component" value="Chromosome 1"/>
</dbReference>
<dbReference type="RNAct" id="Q3V0J1">
    <property type="molecule type" value="protein"/>
</dbReference>
<dbReference type="Bgee" id="ENSMUSG00000038079">
    <property type="expression patterns" value="Expressed in choroid plexus epithelium and 231 other cell types or tissues"/>
</dbReference>
<dbReference type="ExpressionAtlas" id="Q3V0J1">
    <property type="expression patterns" value="baseline and differential"/>
</dbReference>
<dbReference type="GO" id="GO:0035869">
    <property type="term" value="C:ciliary transition zone"/>
    <property type="evidence" value="ECO:0000314"/>
    <property type="project" value="UniProtKB"/>
</dbReference>
<dbReference type="GO" id="GO:0120199">
    <property type="term" value="C:cone photoreceptor outer segment"/>
    <property type="evidence" value="ECO:0000314"/>
    <property type="project" value="MGI"/>
</dbReference>
<dbReference type="GO" id="GO:0015630">
    <property type="term" value="C:microtubule cytoskeleton"/>
    <property type="evidence" value="ECO:0007669"/>
    <property type="project" value="Ensembl"/>
</dbReference>
<dbReference type="GO" id="GO:0016607">
    <property type="term" value="C:nuclear speck"/>
    <property type="evidence" value="ECO:0007669"/>
    <property type="project" value="Ensembl"/>
</dbReference>
<dbReference type="GO" id="GO:0032391">
    <property type="term" value="C:photoreceptor connecting cilium"/>
    <property type="evidence" value="ECO:0000314"/>
    <property type="project" value="MGI"/>
</dbReference>
<dbReference type="GO" id="GO:0005886">
    <property type="term" value="C:plasma membrane"/>
    <property type="evidence" value="ECO:0007669"/>
    <property type="project" value="Ensembl"/>
</dbReference>
<dbReference type="GO" id="GO:0120200">
    <property type="term" value="C:rod photoreceptor outer segment"/>
    <property type="evidence" value="ECO:0000314"/>
    <property type="project" value="MGI"/>
</dbReference>
<dbReference type="GO" id="GO:0060271">
    <property type="term" value="P:cilium assembly"/>
    <property type="evidence" value="ECO:0000315"/>
    <property type="project" value="UniProtKB"/>
</dbReference>
<dbReference type="GO" id="GO:0030111">
    <property type="term" value="P:regulation of Wnt signaling pathway"/>
    <property type="evidence" value="ECO:0000315"/>
    <property type="project" value="UniProtKB"/>
</dbReference>
<dbReference type="InterPro" id="IPR029409">
    <property type="entry name" value="TMEM237"/>
</dbReference>
<dbReference type="PANTHER" id="PTHR28388">
    <property type="entry name" value="TRANSMEMBRANE PROTEIN 237"/>
    <property type="match status" value="1"/>
</dbReference>
<dbReference type="PANTHER" id="PTHR28388:SF1">
    <property type="entry name" value="TRANSMEMBRANE PROTEIN 237"/>
    <property type="match status" value="1"/>
</dbReference>
<dbReference type="Pfam" id="PF15383">
    <property type="entry name" value="TMEM237"/>
    <property type="match status" value="1"/>
</dbReference>
<feature type="chain" id="PRO_0000076170" description="Transmembrane protein 237">
    <location>
        <begin position="1"/>
        <end position="427"/>
    </location>
</feature>
<feature type="transmembrane region" description="Helical" evidence="2">
    <location>
        <begin position="252"/>
        <end position="272"/>
    </location>
</feature>
<feature type="transmembrane region" description="Helical" evidence="2">
    <location>
        <begin position="290"/>
        <end position="310"/>
    </location>
</feature>
<feature type="transmembrane region" description="Helical" evidence="2">
    <location>
        <begin position="325"/>
        <end position="345"/>
    </location>
</feature>
<feature type="transmembrane region" description="Helical" evidence="2">
    <location>
        <begin position="375"/>
        <end position="395"/>
    </location>
</feature>
<feature type="region of interest" description="Disordered" evidence="3">
    <location>
        <begin position="1"/>
        <end position="172"/>
    </location>
</feature>
<feature type="compositionally biased region" description="Polar residues" evidence="3">
    <location>
        <begin position="28"/>
        <end position="40"/>
    </location>
</feature>
<feature type="compositionally biased region" description="Acidic residues" evidence="3">
    <location>
        <begin position="43"/>
        <end position="52"/>
    </location>
</feature>
<feature type="compositionally biased region" description="Basic and acidic residues" evidence="3">
    <location>
        <begin position="75"/>
        <end position="87"/>
    </location>
</feature>
<feature type="compositionally biased region" description="Polar residues" evidence="3">
    <location>
        <begin position="118"/>
        <end position="131"/>
    </location>
</feature>
<feature type="modified residue" description="Phosphoserine" evidence="1">
    <location>
        <position position="25"/>
    </location>
</feature>
<feature type="modified residue" description="Phosphoserine" evidence="1">
    <location>
        <position position="72"/>
    </location>
</feature>
<feature type="splice variant" id="VSP_042384" description="In isoform 2." evidence="5">
    <original>MRDDSGPPLEEDQA</original>
    <variation>MTSRETVGEPPPLLGTPADAE</variation>
    <location>
        <begin position="1"/>
        <end position="14"/>
    </location>
</feature>
<feature type="splice variant" id="VSP_042385" description="In isoform 3." evidence="6">
    <original>MRDDSGPPLEEDQA</original>
    <variation>MGKKQVVSEPQ</variation>
    <location>
        <begin position="1"/>
        <end position="14"/>
    </location>
</feature>
<feature type="splice variant" id="VSP_042386" description="In isoform 2 and isoform 3." evidence="5 6">
    <location>
        <begin position="29"/>
        <end position="49"/>
    </location>
</feature>
<reference key="1">
    <citation type="journal article" date="2005" name="Science">
        <title>The transcriptional landscape of the mammalian genome.</title>
        <authorList>
            <person name="Carninci P."/>
            <person name="Kasukawa T."/>
            <person name="Katayama S."/>
            <person name="Gough J."/>
            <person name="Frith M.C."/>
            <person name="Maeda N."/>
            <person name="Oyama R."/>
            <person name="Ravasi T."/>
            <person name="Lenhard B."/>
            <person name="Wells C."/>
            <person name="Kodzius R."/>
            <person name="Shimokawa K."/>
            <person name="Bajic V.B."/>
            <person name="Brenner S.E."/>
            <person name="Batalov S."/>
            <person name="Forrest A.R."/>
            <person name="Zavolan M."/>
            <person name="Davis M.J."/>
            <person name="Wilming L.G."/>
            <person name="Aidinis V."/>
            <person name="Allen J.E."/>
            <person name="Ambesi-Impiombato A."/>
            <person name="Apweiler R."/>
            <person name="Aturaliya R.N."/>
            <person name="Bailey T.L."/>
            <person name="Bansal M."/>
            <person name="Baxter L."/>
            <person name="Beisel K.W."/>
            <person name="Bersano T."/>
            <person name="Bono H."/>
            <person name="Chalk A.M."/>
            <person name="Chiu K.P."/>
            <person name="Choudhary V."/>
            <person name="Christoffels A."/>
            <person name="Clutterbuck D.R."/>
            <person name="Crowe M.L."/>
            <person name="Dalla E."/>
            <person name="Dalrymple B.P."/>
            <person name="de Bono B."/>
            <person name="Della Gatta G."/>
            <person name="di Bernardo D."/>
            <person name="Down T."/>
            <person name="Engstrom P."/>
            <person name="Fagiolini M."/>
            <person name="Faulkner G."/>
            <person name="Fletcher C.F."/>
            <person name="Fukushima T."/>
            <person name="Furuno M."/>
            <person name="Futaki S."/>
            <person name="Gariboldi M."/>
            <person name="Georgii-Hemming P."/>
            <person name="Gingeras T.R."/>
            <person name="Gojobori T."/>
            <person name="Green R.E."/>
            <person name="Gustincich S."/>
            <person name="Harbers M."/>
            <person name="Hayashi Y."/>
            <person name="Hensch T.K."/>
            <person name="Hirokawa N."/>
            <person name="Hill D."/>
            <person name="Huminiecki L."/>
            <person name="Iacono M."/>
            <person name="Ikeo K."/>
            <person name="Iwama A."/>
            <person name="Ishikawa T."/>
            <person name="Jakt M."/>
            <person name="Kanapin A."/>
            <person name="Katoh M."/>
            <person name="Kawasawa Y."/>
            <person name="Kelso J."/>
            <person name="Kitamura H."/>
            <person name="Kitano H."/>
            <person name="Kollias G."/>
            <person name="Krishnan S.P."/>
            <person name="Kruger A."/>
            <person name="Kummerfeld S.K."/>
            <person name="Kurochkin I.V."/>
            <person name="Lareau L.F."/>
            <person name="Lazarevic D."/>
            <person name="Lipovich L."/>
            <person name="Liu J."/>
            <person name="Liuni S."/>
            <person name="McWilliam S."/>
            <person name="Madan Babu M."/>
            <person name="Madera M."/>
            <person name="Marchionni L."/>
            <person name="Matsuda H."/>
            <person name="Matsuzawa S."/>
            <person name="Miki H."/>
            <person name="Mignone F."/>
            <person name="Miyake S."/>
            <person name="Morris K."/>
            <person name="Mottagui-Tabar S."/>
            <person name="Mulder N."/>
            <person name="Nakano N."/>
            <person name="Nakauchi H."/>
            <person name="Ng P."/>
            <person name="Nilsson R."/>
            <person name="Nishiguchi S."/>
            <person name="Nishikawa S."/>
            <person name="Nori F."/>
            <person name="Ohara O."/>
            <person name="Okazaki Y."/>
            <person name="Orlando V."/>
            <person name="Pang K.C."/>
            <person name="Pavan W.J."/>
            <person name="Pavesi G."/>
            <person name="Pesole G."/>
            <person name="Petrovsky N."/>
            <person name="Piazza S."/>
            <person name="Reed J."/>
            <person name="Reid J.F."/>
            <person name="Ring B.Z."/>
            <person name="Ringwald M."/>
            <person name="Rost B."/>
            <person name="Ruan Y."/>
            <person name="Salzberg S.L."/>
            <person name="Sandelin A."/>
            <person name="Schneider C."/>
            <person name="Schoenbach C."/>
            <person name="Sekiguchi K."/>
            <person name="Semple C.A."/>
            <person name="Seno S."/>
            <person name="Sessa L."/>
            <person name="Sheng Y."/>
            <person name="Shibata Y."/>
            <person name="Shimada H."/>
            <person name="Shimada K."/>
            <person name="Silva D."/>
            <person name="Sinclair B."/>
            <person name="Sperling S."/>
            <person name="Stupka E."/>
            <person name="Sugiura K."/>
            <person name="Sultana R."/>
            <person name="Takenaka Y."/>
            <person name="Taki K."/>
            <person name="Tammoja K."/>
            <person name="Tan S.L."/>
            <person name="Tang S."/>
            <person name="Taylor M.S."/>
            <person name="Tegner J."/>
            <person name="Teichmann S.A."/>
            <person name="Ueda H.R."/>
            <person name="van Nimwegen E."/>
            <person name="Verardo R."/>
            <person name="Wei C.L."/>
            <person name="Yagi K."/>
            <person name="Yamanishi H."/>
            <person name="Zabarovsky E."/>
            <person name="Zhu S."/>
            <person name="Zimmer A."/>
            <person name="Hide W."/>
            <person name="Bult C."/>
            <person name="Grimmond S.M."/>
            <person name="Teasdale R.D."/>
            <person name="Liu E.T."/>
            <person name="Brusic V."/>
            <person name="Quackenbush J."/>
            <person name="Wahlestedt C."/>
            <person name="Mattick J.S."/>
            <person name="Hume D.A."/>
            <person name="Kai C."/>
            <person name="Sasaki D."/>
            <person name="Tomaru Y."/>
            <person name="Fukuda S."/>
            <person name="Kanamori-Katayama M."/>
            <person name="Suzuki M."/>
            <person name="Aoki J."/>
            <person name="Arakawa T."/>
            <person name="Iida J."/>
            <person name="Imamura K."/>
            <person name="Itoh M."/>
            <person name="Kato T."/>
            <person name="Kawaji H."/>
            <person name="Kawagashira N."/>
            <person name="Kawashima T."/>
            <person name="Kojima M."/>
            <person name="Kondo S."/>
            <person name="Konno H."/>
            <person name="Nakano K."/>
            <person name="Ninomiya N."/>
            <person name="Nishio T."/>
            <person name="Okada M."/>
            <person name="Plessy C."/>
            <person name="Shibata K."/>
            <person name="Shiraki T."/>
            <person name="Suzuki S."/>
            <person name="Tagami M."/>
            <person name="Waki K."/>
            <person name="Watahiki A."/>
            <person name="Okamura-Oho Y."/>
            <person name="Suzuki H."/>
            <person name="Kawai J."/>
            <person name="Hayashizaki Y."/>
        </authorList>
    </citation>
    <scope>NUCLEOTIDE SEQUENCE [LARGE SCALE MRNA] (ISOFORMS 1 AND 3)</scope>
    <source>
        <strain>C57BL/6J</strain>
        <tissue>Placenta</tissue>
        <tissue>Testis</tissue>
    </source>
</reference>
<reference key="2">
    <citation type="journal article" date="2009" name="PLoS Biol.">
        <title>Lineage-specific biology revealed by a finished genome assembly of the mouse.</title>
        <authorList>
            <person name="Church D.M."/>
            <person name="Goodstadt L."/>
            <person name="Hillier L.W."/>
            <person name="Zody M.C."/>
            <person name="Goldstein S."/>
            <person name="She X."/>
            <person name="Bult C.J."/>
            <person name="Agarwala R."/>
            <person name="Cherry J.L."/>
            <person name="DiCuccio M."/>
            <person name="Hlavina W."/>
            <person name="Kapustin Y."/>
            <person name="Meric P."/>
            <person name="Maglott D."/>
            <person name="Birtle Z."/>
            <person name="Marques A.C."/>
            <person name="Graves T."/>
            <person name="Zhou S."/>
            <person name="Teague B."/>
            <person name="Potamousis K."/>
            <person name="Churas C."/>
            <person name="Place M."/>
            <person name="Herschleb J."/>
            <person name="Runnheim R."/>
            <person name="Forrest D."/>
            <person name="Amos-Landgraf J."/>
            <person name="Schwartz D.C."/>
            <person name="Cheng Z."/>
            <person name="Lindblad-Toh K."/>
            <person name="Eichler E.E."/>
            <person name="Ponting C.P."/>
        </authorList>
    </citation>
    <scope>NUCLEOTIDE SEQUENCE [LARGE SCALE GENOMIC DNA]</scope>
    <source>
        <strain>C57BL/6J</strain>
    </source>
</reference>
<reference key="3">
    <citation type="journal article" date="2004" name="Genome Res.">
        <title>The status, quality, and expansion of the NIH full-length cDNA project: the Mammalian Gene Collection (MGC).</title>
        <authorList>
            <consortium name="The MGC Project Team"/>
        </authorList>
    </citation>
    <scope>NUCLEOTIDE SEQUENCE [LARGE SCALE MRNA] (ISOFORM 2)</scope>
    <source>
        <tissue>Brain</tissue>
    </source>
</reference>
<reference key="4">
    <citation type="journal article" date="2009" name="Immunity">
        <title>The phagosomal proteome in interferon-gamma-activated macrophages.</title>
        <authorList>
            <person name="Trost M."/>
            <person name="English L."/>
            <person name="Lemieux S."/>
            <person name="Courcelles M."/>
            <person name="Desjardins M."/>
            <person name="Thibault P."/>
        </authorList>
    </citation>
    <scope>IDENTIFICATION BY MASS SPECTROMETRY [LARGE SCALE ANALYSIS]</scope>
</reference>
<reference key="5">
    <citation type="journal article" date="2011" name="Am. J. Hum. Genet.">
        <title>TMEM237 is mutated in individuals with a Joubert syndrome related disorder and expands the role of the TMEM family at the ciliary transition zone.</title>
        <authorList>
            <person name="Huang L."/>
            <person name="Szymanska K."/>
            <person name="Jensen V.L."/>
            <person name="Janecke A.R."/>
            <person name="Innes A.M."/>
            <person name="Davis E.E."/>
            <person name="Frosk P."/>
            <person name="Li C."/>
            <person name="Willer J.R."/>
            <person name="Chodirker B.N."/>
            <person name="Greenberg C.R."/>
            <person name="McLeod D.R."/>
            <person name="Bernier F.P."/>
            <person name="Chudley A.E."/>
            <person name="Muller T."/>
            <person name="Shboul M."/>
            <person name="Logan C.V."/>
            <person name="Loucks C.M."/>
            <person name="Beaulieu C.L."/>
            <person name="Bowie R.V."/>
            <person name="Bell S.M."/>
            <person name="Adkins J."/>
            <person name="Zuniga F.I."/>
            <person name="Ross K.D."/>
            <person name="Wang J."/>
            <person name="Ban M.R."/>
            <person name="Becker C."/>
            <person name="Nurnberg P."/>
            <person name="Douglas S."/>
            <person name="Craft C.M."/>
            <person name="Akimenko M.A."/>
            <person name="Hegele R.A."/>
            <person name="Ober C."/>
            <person name="Utermann G."/>
            <person name="Bolz H.J."/>
            <person name="Bulman D.E."/>
            <person name="Katsanis N."/>
            <person name="Blacque O.E."/>
            <person name="Doherty D."/>
            <person name="Parboosingh J.S."/>
            <person name="Leroux M.R."/>
            <person name="Johnson C.A."/>
            <person name="Boycott K.M."/>
        </authorList>
    </citation>
    <scope>FUNCTION</scope>
    <scope>SUBCELLULAR LOCATION</scope>
</reference>
<sequence length="427" mass="47343">MRDDSGPPLEEDQARPPRALPPVPSAIQVCSSFVENNSRMDQQDDLVGEDDIPLSHPKKKKSRTKSSLATASSEGHAEPVVNRRAEGSEPPAAELKEHPEAPAPRRQKKIRPPPELETSLTERPSSPSLLRNENGIDAEPREEAVIPKPRRKAKKTQPAEPQYASELGVEDEDILTDEQSTLEHHSRFTAPTGVSQPVGKVFVEKSRRFQAADRSELIKTTENIDVSMDVKPSWTTRDVALSVHRAFRMVGLFSHGFLAGCAVWNTVVIYVLAGDQLSNVSNLLQQYKPLAYPFQSLLYLLLALSTVSAFDRTDFAKISVAIRNFLALEPTALASFLYFTALILSLSQQMTSDRIHLYEPSVNGSLWAAEAEEPILVPWIIVNLVVALLVGLSWLFLSYRPGMDLSEELMFFSDVDEHPETGTKASP</sequence>